<sequence length="164" mass="17693">MTEFTHINQQGHAKMVDVSDKQITKRTAVAHSSITVNKTIFKQISNNTNTKGNVLNTAQIAGIMAAKNTSTIIPMCHPLPLTGIDVHFSWDETNAPLYTLNIQTTVSTTGKTGVEMEALTAASATALTIYDMTKAVDKGMIIGETYLESKSGGKSGDFQRQSNQ</sequence>
<name>MOAC_STAAW</name>
<proteinExistence type="inferred from homology"/>
<keyword id="KW-0456">Lyase</keyword>
<keyword id="KW-0501">Molybdenum cofactor biosynthesis</keyword>
<protein>
    <recommendedName>
        <fullName evidence="1">Cyclic pyranopterin monophosphate synthase</fullName>
        <ecNumber evidence="1">4.6.1.17</ecNumber>
    </recommendedName>
    <alternativeName>
        <fullName evidence="1">Molybdenum cofactor biosynthesis protein C</fullName>
    </alternativeName>
</protein>
<feature type="chain" id="PRO_0000097834" description="Cyclic pyranopterin monophosphate synthase">
    <location>
        <begin position="1"/>
        <end position="164"/>
    </location>
</feature>
<feature type="active site" evidence="1">
    <location>
        <position position="131"/>
    </location>
</feature>
<feature type="binding site" evidence="1">
    <location>
        <begin position="75"/>
        <end position="77"/>
    </location>
    <ligand>
        <name>substrate</name>
    </ligand>
</feature>
<feature type="binding site" evidence="1">
    <location>
        <begin position="116"/>
        <end position="117"/>
    </location>
    <ligand>
        <name>substrate</name>
    </ligand>
</feature>
<reference key="1">
    <citation type="journal article" date="2002" name="Lancet">
        <title>Genome and virulence determinants of high virulence community-acquired MRSA.</title>
        <authorList>
            <person name="Baba T."/>
            <person name="Takeuchi F."/>
            <person name="Kuroda M."/>
            <person name="Yuzawa H."/>
            <person name="Aoki K."/>
            <person name="Oguchi A."/>
            <person name="Nagai Y."/>
            <person name="Iwama N."/>
            <person name="Asano K."/>
            <person name="Naimi T."/>
            <person name="Kuroda H."/>
            <person name="Cui L."/>
            <person name="Yamamoto K."/>
            <person name="Hiramatsu K."/>
        </authorList>
    </citation>
    <scope>NUCLEOTIDE SEQUENCE [LARGE SCALE GENOMIC DNA]</scope>
    <source>
        <strain>MW2</strain>
    </source>
</reference>
<accession>Q8NVA0</accession>
<comment type="function">
    <text evidence="1">Catalyzes the conversion of (8S)-3',8-cyclo-7,8-dihydroguanosine 5'-triphosphate to cyclic pyranopterin monophosphate (cPMP).</text>
</comment>
<comment type="catalytic activity">
    <reaction evidence="1">
        <text>(8S)-3',8-cyclo-7,8-dihydroguanosine 5'-triphosphate = cyclic pyranopterin phosphate + diphosphate</text>
        <dbReference type="Rhea" id="RHEA:49580"/>
        <dbReference type="ChEBI" id="CHEBI:33019"/>
        <dbReference type="ChEBI" id="CHEBI:59648"/>
        <dbReference type="ChEBI" id="CHEBI:131766"/>
        <dbReference type="EC" id="4.6.1.17"/>
    </reaction>
</comment>
<comment type="pathway">
    <text evidence="1">Cofactor biosynthesis; molybdopterin biosynthesis.</text>
</comment>
<comment type="subunit">
    <text evidence="1">Homohexamer; trimer of dimers.</text>
</comment>
<comment type="similarity">
    <text evidence="1">Belongs to the MoaC family.</text>
</comment>
<dbReference type="EC" id="4.6.1.17" evidence="1"/>
<dbReference type="EMBL" id="BA000033">
    <property type="protein sequence ID" value="BAB96057.1"/>
    <property type="molecule type" value="Genomic_DNA"/>
</dbReference>
<dbReference type="RefSeq" id="WP_000134536.1">
    <property type="nucleotide sequence ID" value="NC_003923.1"/>
</dbReference>
<dbReference type="SMR" id="Q8NVA0"/>
<dbReference type="KEGG" id="sam:MW2192"/>
<dbReference type="HOGENOM" id="CLU_074693_1_1_9"/>
<dbReference type="UniPathway" id="UPA00344"/>
<dbReference type="GO" id="GO:0061799">
    <property type="term" value="F:cyclic pyranopterin monophosphate synthase activity"/>
    <property type="evidence" value="ECO:0007669"/>
    <property type="project" value="UniProtKB-UniRule"/>
</dbReference>
<dbReference type="GO" id="GO:0006777">
    <property type="term" value="P:Mo-molybdopterin cofactor biosynthetic process"/>
    <property type="evidence" value="ECO:0007669"/>
    <property type="project" value="UniProtKB-UniRule"/>
</dbReference>
<dbReference type="CDD" id="cd01420">
    <property type="entry name" value="MoaC_PE"/>
    <property type="match status" value="1"/>
</dbReference>
<dbReference type="Gene3D" id="3.30.70.640">
    <property type="entry name" value="Molybdopterin cofactor biosynthesis C (MoaC) domain"/>
    <property type="match status" value="1"/>
</dbReference>
<dbReference type="HAMAP" id="MF_01224_B">
    <property type="entry name" value="MoaC_B"/>
    <property type="match status" value="1"/>
</dbReference>
<dbReference type="InterPro" id="IPR023045">
    <property type="entry name" value="MoaC"/>
</dbReference>
<dbReference type="InterPro" id="IPR047594">
    <property type="entry name" value="MoaC_bact/euk"/>
</dbReference>
<dbReference type="InterPro" id="IPR036522">
    <property type="entry name" value="MoaC_sf"/>
</dbReference>
<dbReference type="InterPro" id="IPR050105">
    <property type="entry name" value="MoCo_biosynth_MoaA/MoaC"/>
</dbReference>
<dbReference type="InterPro" id="IPR002820">
    <property type="entry name" value="Mopterin_CF_biosynth-C_dom"/>
</dbReference>
<dbReference type="NCBIfam" id="TIGR00581">
    <property type="entry name" value="moaC"/>
    <property type="match status" value="1"/>
</dbReference>
<dbReference type="NCBIfam" id="NF006870">
    <property type="entry name" value="PRK09364.1"/>
    <property type="match status" value="1"/>
</dbReference>
<dbReference type="PANTHER" id="PTHR22960">
    <property type="entry name" value="MOLYBDOPTERIN COFACTOR SYNTHESIS PROTEIN A"/>
    <property type="match status" value="1"/>
</dbReference>
<dbReference type="Pfam" id="PF01967">
    <property type="entry name" value="MoaC"/>
    <property type="match status" value="1"/>
</dbReference>
<dbReference type="SUPFAM" id="SSF55040">
    <property type="entry name" value="Molybdenum cofactor biosynthesis protein C, MoaC"/>
    <property type="match status" value="1"/>
</dbReference>
<gene>
    <name evidence="1" type="primary">moaC</name>
    <name type="ordered locus">MW2192</name>
</gene>
<organism>
    <name type="scientific">Staphylococcus aureus (strain MW2)</name>
    <dbReference type="NCBI Taxonomy" id="196620"/>
    <lineage>
        <taxon>Bacteria</taxon>
        <taxon>Bacillati</taxon>
        <taxon>Bacillota</taxon>
        <taxon>Bacilli</taxon>
        <taxon>Bacillales</taxon>
        <taxon>Staphylococcaceae</taxon>
        <taxon>Staphylococcus</taxon>
    </lineage>
</organism>
<evidence type="ECO:0000255" key="1">
    <source>
        <dbReference type="HAMAP-Rule" id="MF_01224"/>
    </source>
</evidence>